<sequence>MPFVTIDLFEGRSQEQKNQLAREVTEVVSRIAKAPKENIHVFINDMPEGTYYPQGEMKQKS</sequence>
<name>Y1139_STRP1</name>
<reference key="1">
    <citation type="journal article" date="2001" name="Proc. Natl. Acad. Sci. U.S.A.">
        <title>Complete genome sequence of an M1 strain of Streptococcus pyogenes.</title>
        <authorList>
            <person name="Ferretti J.J."/>
            <person name="McShan W.M."/>
            <person name="Ajdic D.J."/>
            <person name="Savic D.J."/>
            <person name="Savic G."/>
            <person name="Lyon K."/>
            <person name="Primeaux C."/>
            <person name="Sezate S."/>
            <person name="Suvorov A.N."/>
            <person name="Kenton S."/>
            <person name="Lai H.S."/>
            <person name="Lin S.P."/>
            <person name="Qian Y."/>
            <person name="Jia H.G."/>
            <person name="Najar F.Z."/>
            <person name="Ren Q."/>
            <person name="Zhu H."/>
            <person name="Song L."/>
            <person name="White J."/>
            <person name="Yuan X."/>
            <person name="Clifton S.W."/>
            <person name="Roe B.A."/>
            <person name="McLaughlin R.E."/>
        </authorList>
    </citation>
    <scope>NUCLEOTIDE SEQUENCE [LARGE SCALE GENOMIC DNA]</scope>
    <source>
        <strain>ATCC 700294 / SF370 / Serotype M1</strain>
    </source>
</reference>
<reference key="2">
    <citation type="journal article" date="2005" name="J. Infect. Dis.">
        <title>Evolutionary origin and emergence of a highly successful clone of serotype M1 group A Streptococcus involved multiple horizontal gene transfer events.</title>
        <authorList>
            <person name="Sumby P."/>
            <person name="Porcella S.F."/>
            <person name="Madrigal A.G."/>
            <person name="Barbian K.D."/>
            <person name="Virtaneva K."/>
            <person name="Ricklefs S.M."/>
            <person name="Sturdevant D.E."/>
            <person name="Graham M.R."/>
            <person name="Vuopio-Varkila J."/>
            <person name="Hoe N.P."/>
            <person name="Musser J.M."/>
        </authorList>
    </citation>
    <scope>NUCLEOTIDE SEQUENCE [LARGE SCALE GENOMIC DNA]</scope>
    <source>
        <strain>ATCC BAA-947 / MGAS5005 / Serotype M1</strain>
    </source>
</reference>
<gene>
    <name type="ordered locus">SPy_1139</name>
    <name type="ordered locus">M5005_Spy0861</name>
</gene>
<organism>
    <name type="scientific">Streptococcus pyogenes serotype M1</name>
    <dbReference type="NCBI Taxonomy" id="301447"/>
    <lineage>
        <taxon>Bacteria</taxon>
        <taxon>Bacillati</taxon>
        <taxon>Bacillota</taxon>
        <taxon>Bacilli</taxon>
        <taxon>Lactobacillales</taxon>
        <taxon>Streptococcaceae</taxon>
        <taxon>Streptococcus</taxon>
    </lineage>
</organism>
<proteinExistence type="inferred from homology"/>
<dbReference type="EC" id="5.3.2.-"/>
<dbReference type="EMBL" id="AE004092">
    <property type="protein sequence ID" value="AAK34011.1"/>
    <property type="molecule type" value="Genomic_DNA"/>
</dbReference>
<dbReference type="EMBL" id="CP000017">
    <property type="protein sequence ID" value="AAZ51479.1"/>
    <property type="molecule type" value="Genomic_DNA"/>
</dbReference>
<dbReference type="RefSeq" id="NP_269290.1">
    <property type="nucleotide sequence ID" value="NC_002737.2"/>
</dbReference>
<dbReference type="SMR" id="P67532"/>
<dbReference type="PaxDb" id="1314-HKU360_00923"/>
<dbReference type="KEGG" id="spy:SPy_1139"/>
<dbReference type="KEGG" id="spz:M5005_Spy0861"/>
<dbReference type="PATRIC" id="fig|160490.10.peg.992"/>
<dbReference type="HOGENOM" id="CLU_148073_5_1_9"/>
<dbReference type="OMA" id="NIHVILQ"/>
<dbReference type="Proteomes" id="UP000000750">
    <property type="component" value="Chromosome"/>
</dbReference>
<dbReference type="GO" id="GO:0016853">
    <property type="term" value="F:isomerase activity"/>
    <property type="evidence" value="ECO:0007669"/>
    <property type="project" value="UniProtKB-KW"/>
</dbReference>
<dbReference type="Gene3D" id="3.30.429.10">
    <property type="entry name" value="Macrophage Migration Inhibitory Factor"/>
    <property type="match status" value="1"/>
</dbReference>
<dbReference type="InterPro" id="IPR004370">
    <property type="entry name" value="4-OT-like_dom"/>
</dbReference>
<dbReference type="InterPro" id="IPR014347">
    <property type="entry name" value="Tautomerase/MIF_sf"/>
</dbReference>
<dbReference type="NCBIfam" id="NF002571">
    <property type="entry name" value="PRK02220.1"/>
    <property type="match status" value="1"/>
</dbReference>
<dbReference type="NCBIfam" id="NF002622">
    <property type="entry name" value="PRK02289.1"/>
    <property type="match status" value="1"/>
</dbReference>
<dbReference type="PANTHER" id="PTHR35530:SF1">
    <property type="entry name" value="2-HYDROXYMUCONATE TAUTOMERASE"/>
    <property type="match status" value="1"/>
</dbReference>
<dbReference type="PANTHER" id="PTHR35530">
    <property type="entry name" value="TAUTOMERASE-RELATED"/>
    <property type="match status" value="1"/>
</dbReference>
<dbReference type="Pfam" id="PF01361">
    <property type="entry name" value="Tautomerase"/>
    <property type="match status" value="1"/>
</dbReference>
<dbReference type="SUPFAM" id="SSF55331">
    <property type="entry name" value="Tautomerase/MIF"/>
    <property type="match status" value="1"/>
</dbReference>
<comment type="similarity">
    <text evidence="2">Belongs to the 4-oxalocrotonate tautomerase family.</text>
</comment>
<keyword id="KW-0413">Isomerase</keyword>
<keyword id="KW-1185">Reference proteome</keyword>
<protein>
    <recommendedName>
        <fullName>Probable tautomerase SPy_1139/M5005_Spy0861</fullName>
        <ecNumber>5.3.2.-</ecNumber>
    </recommendedName>
</protein>
<feature type="initiator methionine" description="Removed" evidence="1">
    <location>
        <position position="1"/>
    </location>
</feature>
<feature type="chain" id="PRO_0000209555" description="Probable tautomerase SPy_1139/M5005_Spy0861">
    <location>
        <begin position="2"/>
        <end position="61"/>
    </location>
</feature>
<feature type="active site" description="Proton acceptor; via imino nitrogen" evidence="1">
    <location>
        <position position="2"/>
    </location>
</feature>
<evidence type="ECO:0000250" key="1"/>
<evidence type="ECO:0000305" key="2"/>
<accession>P67532</accession>
<accession>Q48YU3</accession>
<accession>Q99ZP7</accession>